<reference key="1">
    <citation type="journal article" date="1996" name="DNA Res.">
        <title>Sequence analysis of the genome of the unicellular cyanobacterium Synechocystis sp. strain PCC6803. II. Sequence determination of the entire genome and assignment of potential protein-coding regions.</title>
        <authorList>
            <person name="Kaneko T."/>
            <person name="Sato S."/>
            <person name="Kotani H."/>
            <person name="Tanaka A."/>
            <person name="Asamizu E."/>
            <person name="Nakamura Y."/>
            <person name="Miyajima N."/>
            <person name="Hirosawa M."/>
            <person name="Sugiura M."/>
            <person name="Sasamoto S."/>
            <person name="Kimura T."/>
            <person name="Hosouchi T."/>
            <person name="Matsuno A."/>
            <person name="Muraki A."/>
            <person name="Nakazaki N."/>
            <person name="Naruo K."/>
            <person name="Okumura S."/>
            <person name="Shimpo S."/>
            <person name="Takeuchi C."/>
            <person name="Wada T."/>
            <person name="Watanabe A."/>
            <person name="Yamada M."/>
            <person name="Yasuda M."/>
            <person name="Tabata S."/>
        </authorList>
    </citation>
    <scope>NUCLEOTIDE SEQUENCE [LARGE SCALE GENOMIC DNA]</scope>
    <source>
        <strain>ATCC 27184 / PCC 6803 / Kazusa</strain>
    </source>
</reference>
<reference key="2">
    <citation type="journal article" date="2010" name="Proc. Natl. Acad. Sci. U.S.A.">
        <title>Identification of a gene essential for protoporphyrinogen IX oxidase activity in the cyanobacterium Synechocystis sp. PCC6803.</title>
        <authorList>
            <person name="Kato K."/>
            <person name="Tanaka R."/>
            <person name="Sano S."/>
            <person name="Tanaka A."/>
            <person name="Hosaka H."/>
        </authorList>
    </citation>
    <scope>FUNCTION</scope>
    <scope>DISRUPTION PHENOTYPE</scope>
</reference>
<reference key="3">
    <citation type="journal article" date="2018" name="J. Biol. Chem.">
        <title>The cyanobacterial protoporphyrinogen oxidase HemJ is a new b-type heme protein functionally coupled with coproporphyrinogen III oxidase.</title>
        <authorList>
            <person name="Skotnicova P."/>
            <person name="Sobotka R."/>
            <person name="Shepherd M."/>
            <person name="Hajek J."/>
            <person name="Hrouzek P."/>
            <person name="Tichy M."/>
        </authorList>
    </citation>
    <scope>FUNCTION</scope>
    <scope>COFACTOR</scope>
    <scope>PATHWAY</scope>
    <scope>SUBUNIT</scope>
    <scope>SUBCELLULAR LOCATION</scope>
    <scope>INTERACTION WITH SLL1106</scope>
    <scope>DISRUPTION PHENOTYPE</scope>
    <source>
        <strain>ATCC 27184 / PCC 6803 / N-1</strain>
    </source>
</reference>
<sequence length="210" mass="24064">MPKREYFSLPCPLSTFTMAYYWFKAFHLIGIVVWFAGLFYLVRLFVYHAEADQEPEPAKTILKKQYELMEKRLYNIITTPGMVVTVAMAIGLIFTEPEILKSGWLHIKLTFVALLLLYHFYCGRVMKKLAQGESQWSGQQFRALNEAPTILLVVIVLLAVFKNNLPLDATTWLIVALVIAMAASIQLYAKKRRRDQALLTEQQKAASAQN</sequence>
<name>HEMJ_SYNY3</name>
<accession>P72793</accession>
<gene>
    <name evidence="5 6" type="primary">hemJ</name>
    <name type="ordered locus">slr1790</name>
</gene>
<comment type="function">
    <text evidence="3 4">Catalyzes the oxidation of protoporphyrinogen IX to protoporphyrin IX. Is involved in the biosynthesis of tetrapyrrole molecules like heme and chlorophyll. Does not use oxygen or artificial electron acceptors such as menadione or benzoquinone. Is functionally coupled with coproporphyrinogen III oxidase (CPO) (PubMed:29925590). Is essential for growth (PubMed:20823222).</text>
</comment>
<comment type="catalytic activity">
    <reaction evidence="8">
        <text>protoporphyrinogen IX + 3 A = protoporphyrin IX + 3 AH2</text>
        <dbReference type="Rhea" id="RHEA:62000"/>
        <dbReference type="ChEBI" id="CHEBI:13193"/>
        <dbReference type="ChEBI" id="CHEBI:17499"/>
        <dbReference type="ChEBI" id="CHEBI:57306"/>
        <dbReference type="ChEBI" id="CHEBI:57307"/>
    </reaction>
</comment>
<comment type="cofactor">
    <cofactor evidence="4">
        <name>heme b</name>
        <dbReference type="ChEBI" id="CHEBI:60344"/>
    </cofactor>
    <text evidence="4">Binds 1 heme b (iron(II)-protoporphyrin IX) group per subunit.</text>
</comment>
<comment type="pathway">
    <text evidence="8">Porphyrin-containing compound metabolism; protoporphyrin-IX biosynthesis; protoporphyrin-IX from protoporphyrinogen-IX: step 1/1.</text>
</comment>
<comment type="subunit">
    <text evidence="4">Homodimer. Can also form higher oligomers, most probably tetramers. Interacts with Sll1106, however it is unlikely that Sll1106 is required for PPO function.</text>
</comment>
<comment type="subcellular location">
    <subcellularLocation>
        <location evidence="4">Cell membrane</location>
        <topology evidence="1">Multi-pass membrane protein</topology>
    </subcellularLocation>
</comment>
<comment type="disruption phenotype">
    <text evidence="3">Attempts to disrupt this gene in the wild-type background of Synechocystis only allow to obtain heteroplasmic disruptants. These cells accumulate a substantial amount of protoporphyrin IX.</text>
</comment>
<comment type="similarity">
    <text evidence="2 7">Belongs to the HemJ family.</text>
</comment>
<keyword id="KW-1003">Cell membrane</keyword>
<keyword id="KW-0349">Heme</keyword>
<keyword id="KW-0408">Iron</keyword>
<keyword id="KW-0472">Membrane</keyword>
<keyword id="KW-0479">Metal-binding</keyword>
<keyword id="KW-0560">Oxidoreductase</keyword>
<keyword id="KW-1185">Reference proteome</keyword>
<keyword id="KW-0812">Transmembrane</keyword>
<keyword id="KW-1133">Transmembrane helix</keyword>
<proteinExistence type="evidence at protein level"/>
<organism>
    <name type="scientific">Synechocystis sp. (strain ATCC 27184 / PCC 6803 / Kazusa)</name>
    <dbReference type="NCBI Taxonomy" id="1111708"/>
    <lineage>
        <taxon>Bacteria</taxon>
        <taxon>Bacillati</taxon>
        <taxon>Cyanobacteriota</taxon>
        <taxon>Cyanophyceae</taxon>
        <taxon>Synechococcales</taxon>
        <taxon>Merismopediaceae</taxon>
        <taxon>Synechocystis</taxon>
    </lineage>
</organism>
<evidence type="ECO:0000255" key="1"/>
<evidence type="ECO:0000255" key="2">
    <source>
        <dbReference type="HAMAP-Rule" id="MF_02239"/>
    </source>
</evidence>
<evidence type="ECO:0000269" key="3">
    <source>
    </source>
</evidence>
<evidence type="ECO:0000269" key="4">
    <source>
    </source>
</evidence>
<evidence type="ECO:0000303" key="5">
    <source>
    </source>
</evidence>
<evidence type="ECO:0000303" key="6">
    <source>
    </source>
</evidence>
<evidence type="ECO:0000305" key="7"/>
<evidence type="ECO:0000305" key="8">
    <source>
    </source>
</evidence>
<protein>
    <recommendedName>
        <fullName evidence="5 6">Protoporphyrinogen IX oxidase</fullName>
        <shortName evidence="6">PPO</shortName>
        <shortName evidence="5">Protox</shortName>
        <ecNumber evidence="8">1.3.99.-</ecNumber>
    </recommendedName>
</protein>
<feature type="chain" id="PRO_0000217662" description="Protoporphyrinogen IX oxidase">
    <location>
        <begin position="1"/>
        <end position="210"/>
    </location>
</feature>
<feature type="transmembrane region" description="Helical" evidence="1">
    <location>
        <begin position="22"/>
        <end position="42"/>
    </location>
</feature>
<feature type="transmembrane region" description="Helical" evidence="1">
    <location>
        <begin position="74"/>
        <end position="94"/>
    </location>
</feature>
<feature type="transmembrane region" description="Helical" evidence="1">
    <location>
        <begin position="103"/>
        <end position="123"/>
    </location>
</feature>
<feature type="transmembrane region" description="Helical" evidence="1">
    <location>
        <begin position="141"/>
        <end position="161"/>
    </location>
</feature>
<feature type="transmembrane region" description="Helical" evidence="1">
    <location>
        <begin position="165"/>
        <end position="185"/>
    </location>
</feature>
<feature type="binding site" description="axial binding residue" evidence="8">
    <location>
        <position position="27"/>
    </location>
    <ligand>
        <name>heme</name>
        <dbReference type="ChEBI" id="CHEBI:30413"/>
    </ligand>
    <ligandPart>
        <name>Fe</name>
        <dbReference type="ChEBI" id="CHEBI:18248"/>
    </ligandPart>
</feature>
<feature type="binding site" description="axial binding residue" evidence="8">
    <location>
        <position position="108"/>
    </location>
    <ligand>
        <name>heme</name>
        <dbReference type="ChEBI" id="CHEBI:30413"/>
    </ligand>
    <ligandPart>
        <name>Fe</name>
        <dbReference type="ChEBI" id="CHEBI:18248"/>
    </ligandPart>
</feature>
<dbReference type="EC" id="1.3.99.-" evidence="8"/>
<dbReference type="EMBL" id="BA000022">
    <property type="protein sequence ID" value="BAA16808.1"/>
    <property type="molecule type" value="Genomic_DNA"/>
</dbReference>
<dbReference type="PIR" id="S74656">
    <property type="entry name" value="S74656"/>
</dbReference>
<dbReference type="SMR" id="P72793"/>
<dbReference type="STRING" id="1148.gene:10497664"/>
<dbReference type="PaxDb" id="1148-1651881"/>
<dbReference type="EnsemblBacteria" id="BAA16808">
    <property type="protein sequence ID" value="BAA16808"/>
    <property type="gene ID" value="BAA16808"/>
</dbReference>
<dbReference type="KEGG" id="syn:slr1790"/>
<dbReference type="eggNOG" id="COG1981">
    <property type="taxonomic scope" value="Bacteria"/>
</dbReference>
<dbReference type="InParanoid" id="P72793"/>
<dbReference type="PhylomeDB" id="P72793"/>
<dbReference type="BioCyc" id="MetaCyc:MONOMER-17460"/>
<dbReference type="BRENDA" id="1.3.3.4">
    <property type="organism ID" value="382"/>
</dbReference>
<dbReference type="UniPathway" id="UPA00251">
    <property type="reaction ID" value="UER00324"/>
</dbReference>
<dbReference type="Proteomes" id="UP000001425">
    <property type="component" value="Chromosome"/>
</dbReference>
<dbReference type="GO" id="GO:0005886">
    <property type="term" value="C:plasma membrane"/>
    <property type="evidence" value="ECO:0007669"/>
    <property type="project" value="UniProtKB-SubCell"/>
</dbReference>
<dbReference type="GO" id="GO:0046872">
    <property type="term" value="F:metal ion binding"/>
    <property type="evidence" value="ECO:0007669"/>
    <property type="project" value="UniProtKB-KW"/>
</dbReference>
<dbReference type="GO" id="GO:0070818">
    <property type="term" value="F:protoporphyrinogen oxidase activity"/>
    <property type="evidence" value="ECO:0007669"/>
    <property type="project" value="UniProtKB-UniRule"/>
</dbReference>
<dbReference type="GO" id="GO:0006782">
    <property type="term" value="P:protoporphyrinogen IX biosynthetic process"/>
    <property type="evidence" value="ECO:0007669"/>
    <property type="project" value="UniProtKB-UniRule"/>
</dbReference>
<dbReference type="HAMAP" id="MF_02239">
    <property type="entry name" value="HemJ"/>
    <property type="match status" value="1"/>
</dbReference>
<dbReference type="InterPro" id="IPR005265">
    <property type="entry name" value="HemJ-like"/>
</dbReference>
<dbReference type="NCBIfam" id="TIGR00701">
    <property type="entry name" value="protoporphyrinogen oxidase HemJ"/>
    <property type="match status" value="1"/>
</dbReference>
<dbReference type="PANTHER" id="PTHR40255:SF1">
    <property type="entry name" value="PROTOPORPHYRINOGEN IX OXIDASE"/>
    <property type="match status" value="1"/>
</dbReference>
<dbReference type="PANTHER" id="PTHR40255">
    <property type="entry name" value="UPF0093 MEMBRANE PROTEIN SLR1790"/>
    <property type="match status" value="1"/>
</dbReference>
<dbReference type="Pfam" id="PF03653">
    <property type="entry name" value="UPF0093"/>
    <property type="match status" value="1"/>
</dbReference>